<comment type="function">
    <text evidence="1">Component of the PAF1 complex (PAF1C) which has multiple functions during transcription by RNA polymerase II and is implicated in regulation of development and maintenance of embryonic stem cell pluripotency. PAF1C associates with RNA polymerase II through interaction with POLR2A CTD non-phosphorylated and 'Ser-2'- and 'Ser-5'-phosphorylated forms and is involved in transcriptional elongation, acting both independently and synergistically with TCEA1 and in cooperation with the DSIF complex and HTATSF1. Also acts as a component of the SKI complex, a multiprotein complex that assists the RNA-degrading exosome during the mRNA decay and quality-control pathways. The SKI complex catalyzes mRNA extraction from 80S ribosomal complexes in the 3'-5' direction and channels mRNA to the cytosolic exosome for degradation.</text>
</comment>
<comment type="subunit">
    <text evidence="1">Component of the PAF1 complex (By similarity). Component of the SKI complex (By similarity).</text>
</comment>
<comment type="subcellular location">
    <subcellularLocation>
        <location evidence="1">Nucleus</location>
    </subcellularLocation>
    <subcellularLocation>
        <location evidence="1">Cytoplasm</location>
    </subcellularLocation>
</comment>
<comment type="similarity">
    <text evidence="2">Belongs to the SKI8 family.</text>
</comment>
<gene>
    <name type="primary">skic8</name>
    <name type="synonym">wdr61</name>
    <name type="ORF">zgc:77675</name>
</gene>
<reference key="1">
    <citation type="submission" date="2003-11" db="EMBL/GenBank/DDBJ databases">
        <authorList>
            <consortium name="NIH - Zebrafish Gene Collection (ZGC) project"/>
        </authorList>
    </citation>
    <scope>NUCLEOTIDE SEQUENCE [LARGE SCALE MRNA]</scope>
</reference>
<sequence>MSTQYSILFKQEHAHEDAIWTAAWGRSEKDGSETIVTGSLDDLVKVWKWSDEKLELQWTLEGHQLGVVSVNISQNGAIAASSSLDAHIRLWDLETGKQIKSMDAGPVDAWTVAFSPDSKYIATGSHLGKVNIFGVESGKKEHSLDTRGKFILSIAYSPDGKYLASGAIDGIINIFDIATGKLLHTLEGHAMPIRSLTFSPDSQLLVTASDDGYIKIYDVQHANLAGTLSGHGSWVLSVAFSPDDTHFVSSSSDKSIKVWDTSSRSCVNTFFDHQDQVWSVKYNPTGSKIVSAGDDRAIHIYDCPM</sequence>
<organism>
    <name type="scientific">Danio rerio</name>
    <name type="common">Zebrafish</name>
    <name type="synonym">Brachydanio rerio</name>
    <dbReference type="NCBI Taxonomy" id="7955"/>
    <lineage>
        <taxon>Eukaryota</taxon>
        <taxon>Metazoa</taxon>
        <taxon>Chordata</taxon>
        <taxon>Craniata</taxon>
        <taxon>Vertebrata</taxon>
        <taxon>Euteleostomi</taxon>
        <taxon>Actinopterygii</taxon>
        <taxon>Neopterygii</taxon>
        <taxon>Teleostei</taxon>
        <taxon>Ostariophysi</taxon>
        <taxon>Cypriniformes</taxon>
        <taxon>Danionidae</taxon>
        <taxon>Danioninae</taxon>
        <taxon>Danio</taxon>
    </lineage>
</organism>
<protein>
    <recommendedName>
        <fullName>Superkiller complex protein 8</fullName>
        <shortName>Ski8</shortName>
    </recommendedName>
    <alternativeName>
        <fullName>WD repeat-containing protein 61</fullName>
    </alternativeName>
</protein>
<keyword id="KW-0963">Cytoplasm</keyword>
<keyword id="KW-0539">Nucleus</keyword>
<keyword id="KW-1185">Reference proteome</keyword>
<keyword id="KW-0677">Repeat</keyword>
<keyword id="KW-0853">WD repeat</keyword>
<accession>Q6P5M2</accession>
<evidence type="ECO:0000250" key="1">
    <source>
        <dbReference type="UniProtKB" id="Q9GZS3"/>
    </source>
</evidence>
<evidence type="ECO:0000305" key="2"/>
<proteinExistence type="evidence at transcript level"/>
<dbReference type="EMBL" id="BC062834">
    <property type="protein sequence ID" value="AAH62834.1"/>
    <property type="molecule type" value="mRNA"/>
</dbReference>
<dbReference type="RefSeq" id="NP_957147.1">
    <property type="nucleotide sequence ID" value="NM_200853.1"/>
</dbReference>
<dbReference type="SMR" id="Q6P5M2"/>
<dbReference type="FunCoup" id="Q6P5M2">
    <property type="interactions" value="81"/>
</dbReference>
<dbReference type="STRING" id="7955.ENSDARP00000110861"/>
<dbReference type="PaxDb" id="7955-ENSDARP00000110861"/>
<dbReference type="DNASU" id="393827"/>
<dbReference type="GeneID" id="393827"/>
<dbReference type="KEGG" id="dre:393827"/>
<dbReference type="AGR" id="ZFIN:ZDB-GENE-040426-1851"/>
<dbReference type="CTD" id="80349"/>
<dbReference type="ZFIN" id="ZDB-GENE-040426-1851">
    <property type="gene designation" value="skic8"/>
</dbReference>
<dbReference type="InParanoid" id="Q6P5M2"/>
<dbReference type="OrthoDB" id="17410at2759"/>
<dbReference type="PhylomeDB" id="Q6P5M2"/>
<dbReference type="PRO" id="PR:Q6P5M2"/>
<dbReference type="Proteomes" id="UP000000437">
    <property type="component" value="Chromosome 25"/>
</dbReference>
<dbReference type="GO" id="GO:0016593">
    <property type="term" value="C:Cdc73/Paf1 complex"/>
    <property type="evidence" value="ECO:0000250"/>
    <property type="project" value="UniProtKB"/>
</dbReference>
<dbReference type="GO" id="GO:0005737">
    <property type="term" value="C:cytoplasm"/>
    <property type="evidence" value="ECO:0000250"/>
    <property type="project" value="UniProtKB"/>
</dbReference>
<dbReference type="GO" id="GO:0000791">
    <property type="term" value="C:euchromatin"/>
    <property type="evidence" value="ECO:0000250"/>
    <property type="project" value="UniProtKB"/>
</dbReference>
<dbReference type="GO" id="GO:0005634">
    <property type="term" value="C:nucleus"/>
    <property type="evidence" value="ECO:0000250"/>
    <property type="project" value="UniProtKB"/>
</dbReference>
<dbReference type="GO" id="GO:0055087">
    <property type="term" value="C:Ski complex"/>
    <property type="evidence" value="ECO:0000250"/>
    <property type="project" value="UniProtKB"/>
</dbReference>
<dbReference type="GO" id="GO:0070478">
    <property type="term" value="P:nuclear-transcribed mRNA catabolic process, 3'-5' exonucleolytic nonsense-mediated decay"/>
    <property type="evidence" value="ECO:0000250"/>
    <property type="project" value="UniProtKB"/>
</dbReference>
<dbReference type="GO" id="GO:0072344">
    <property type="term" value="P:rescue of stalled ribosome"/>
    <property type="evidence" value="ECO:0000250"/>
    <property type="project" value="UniProtKB"/>
</dbReference>
<dbReference type="GO" id="GO:0006368">
    <property type="term" value="P:transcription elongation by RNA polymerase II"/>
    <property type="evidence" value="ECO:0000250"/>
    <property type="project" value="UniProtKB"/>
</dbReference>
<dbReference type="CDD" id="cd00200">
    <property type="entry name" value="WD40"/>
    <property type="match status" value="1"/>
</dbReference>
<dbReference type="FunFam" id="2.130.10.10:FF:000094">
    <property type="entry name" value="WD repeat-containing protein 61"/>
    <property type="match status" value="1"/>
</dbReference>
<dbReference type="Gene3D" id="2.130.10.10">
    <property type="entry name" value="YVTN repeat-like/Quinoprotein amine dehydrogenase"/>
    <property type="match status" value="1"/>
</dbReference>
<dbReference type="InterPro" id="IPR020472">
    <property type="entry name" value="G-protein_beta_WD-40_rep"/>
</dbReference>
<dbReference type="InterPro" id="IPR051510">
    <property type="entry name" value="SKI8"/>
</dbReference>
<dbReference type="InterPro" id="IPR015943">
    <property type="entry name" value="WD40/YVTN_repeat-like_dom_sf"/>
</dbReference>
<dbReference type="InterPro" id="IPR019775">
    <property type="entry name" value="WD40_repeat_CS"/>
</dbReference>
<dbReference type="InterPro" id="IPR036322">
    <property type="entry name" value="WD40_repeat_dom_sf"/>
</dbReference>
<dbReference type="InterPro" id="IPR001680">
    <property type="entry name" value="WD40_rpt"/>
</dbReference>
<dbReference type="PANTHER" id="PTHR44090:SF1">
    <property type="entry name" value="SUPERKILLER COMPLEX PROTEIN 8"/>
    <property type="match status" value="1"/>
</dbReference>
<dbReference type="PANTHER" id="PTHR44090">
    <property type="entry name" value="WD REPEAT-CONTAINING PROTEIN 61"/>
    <property type="match status" value="1"/>
</dbReference>
<dbReference type="Pfam" id="PF00400">
    <property type="entry name" value="WD40"/>
    <property type="match status" value="7"/>
</dbReference>
<dbReference type="PRINTS" id="PR00320">
    <property type="entry name" value="GPROTEINBRPT"/>
</dbReference>
<dbReference type="SMART" id="SM00320">
    <property type="entry name" value="WD40"/>
    <property type="match status" value="7"/>
</dbReference>
<dbReference type="SUPFAM" id="SSF50978">
    <property type="entry name" value="WD40 repeat-like"/>
    <property type="match status" value="1"/>
</dbReference>
<dbReference type="PROSITE" id="PS00678">
    <property type="entry name" value="WD_REPEATS_1"/>
    <property type="match status" value="1"/>
</dbReference>
<dbReference type="PROSITE" id="PS50082">
    <property type="entry name" value="WD_REPEATS_2"/>
    <property type="match status" value="6"/>
</dbReference>
<dbReference type="PROSITE" id="PS50294">
    <property type="entry name" value="WD_REPEATS_REGION"/>
    <property type="match status" value="1"/>
</dbReference>
<feature type="chain" id="PRO_0000245855" description="Superkiller complex protein 8">
    <location>
        <begin position="1"/>
        <end position="305"/>
    </location>
</feature>
<feature type="repeat" description="WD 1">
    <location>
        <begin position="14"/>
        <end position="57"/>
    </location>
</feature>
<feature type="repeat" description="WD 2">
    <location>
        <begin position="62"/>
        <end position="101"/>
    </location>
</feature>
<feature type="repeat" description="WD 3">
    <location>
        <begin position="104"/>
        <end position="143"/>
    </location>
</feature>
<feature type="repeat" description="WD 4">
    <location>
        <begin position="146"/>
        <end position="187"/>
    </location>
</feature>
<feature type="repeat" description="WD 5">
    <location>
        <begin position="188"/>
        <end position="227"/>
    </location>
</feature>
<feature type="repeat" description="WD 6">
    <location>
        <begin position="230"/>
        <end position="269"/>
    </location>
</feature>
<feature type="repeat" description="WD 7">
    <location>
        <begin position="272"/>
        <end position="305"/>
    </location>
</feature>
<name>SKI8_DANRE</name>